<gene>
    <name evidence="1" type="primary">pgk</name>
    <name type="ordered locus">Pmen_0460</name>
</gene>
<comment type="catalytic activity">
    <reaction evidence="1">
        <text>(2R)-3-phosphoglycerate + ATP = (2R)-3-phospho-glyceroyl phosphate + ADP</text>
        <dbReference type="Rhea" id="RHEA:14801"/>
        <dbReference type="ChEBI" id="CHEBI:30616"/>
        <dbReference type="ChEBI" id="CHEBI:57604"/>
        <dbReference type="ChEBI" id="CHEBI:58272"/>
        <dbReference type="ChEBI" id="CHEBI:456216"/>
        <dbReference type="EC" id="2.7.2.3"/>
    </reaction>
</comment>
<comment type="pathway">
    <text evidence="1">Carbohydrate degradation; glycolysis; pyruvate from D-glyceraldehyde 3-phosphate: step 2/5.</text>
</comment>
<comment type="subunit">
    <text evidence="1">Monomer.</text>
</comment>
<comment type="subcellular location">
    <subcellularLocation>
        <location evidence="1">Cytoplasm</location>
    </subcellularLocation>
</comment>
<comment type="similarity">
    <text evidence="1">Belongs to the phosphoglycerate kinase family.</text>
</comment>
<reference key="1">
    <citation type="submission" date="2007-04" db="EMBL/GenBank/DDBJ databases">
        <title>Complete sequence of Pseudomonas mendocina ymp.</title>
        <authorList>
            <consortium name="US DOE Joint Genome Institute"/>
            <person name="Copeland A."/>
            <person name="Lucas S."/>
            <person name="Lapidus A."/>
            <person name="Barry K."/>
            <person name="Glavina del Rio T."/>
            <person name="Dalin E."/>
            <person name="Tice H."/>
            <person name="Pitluck S."/>
            <person name="Kiss H."/>
            <person name="Brettin T."/>
            <person name="Detter J.C."/>
            <person name="Bruce D."/>
            <person name="Han C."/>
            <person name="Schmutz J."/>
            <person name="Larimer F."/>
            <person name="Land M."/>
            <person name="Hauser L."/>
            <person name="Kyrpides N."/>
            <person name="Mikhailova N."/>
            <person name="Hersman L."/>
            <person name="Dubois J."/>
            <person name="Maurice P."/>
            <person name="Richardson P."/>
        </authorList>
    </citation>
    <scope>NUCLEOTIDE SEQUENCE [LARGE SCALE GENOMIC DNA]</scope>
    <source>
        <strain>ymp</strain>
    </source>
</reference>
<protein>
    <recommendedName>
        <fullName evidence="1">Phosphoglycerate kinase</fullName>
        <ecNumber evidence="1">2.7.2.3</ecNumber>
    </recommendedName>
</protein>
<name>PGK_ECTM1</name>
<organism>
    <name type="scientific">Ectopseudomonas mendocina (strain ymp)</name>
    <name type="common">Pseudomonas mendocina</name>
    <dbReference type="NCBI Taxonomy" id="399739"/>
    <lineage>
        <taxon>Bacteria</taxon>
        <taxon>Pseudomonadati</taxon>
        <taxon>Pseudomonadota</taxon>
        <taxon>Gammaproteobacteria</taxon>
        <taxon>Pseudomonadales</taxon>
        <taxon>Pseudomonadaceae</taxon>
        <taxon>Ectopseudomonas</taxon>
    </lineage>
</organism>
<keyword id="KW-0067">ATP-binding</keyword>
<keyword id="KW-0963">Cytoplasm</keyword>
<keyword id="KW-0324">Glycolysis</keyword>
<keyword id="KW-0418">Kinase</keyword>
<keyword id="KW-0547">Nucleotide-binding</keyword>
<keyword id="KW-0808">Transferase</keyword>
<sequence length="386" mass="40237">MTVLKMTDLDLAGKRVLIREDLNVPVKDGVVKSDARILASLPTIKLALEKGAAVLVCSHLGRPEEGVYSEEDSLAPVAAYLSKALGREVPLVKDYLGGVEVKAGELVLLENVRFNKGEKKNSDELAQQYAALCDVFVMDAFGTAHRAQGSTHGVAKFAKVACAGPLLAAELEALGKALDKPARPMLAIVAGSKVSTKLDVLNSLADICDSLIVGGGIANTFLAAAGLPVGKSLYEADLVDTAKAIAAKVSVPLPVDVVVAKAFAEDAEATVKSVKDVADDDMILDIGPQTAQQFAEMLKASQTILWNGPVGVFEFDQFGNGTKALALAIAESPAFSIAGGGDTLAAIDKYGVSEQISYISTGGGAFLEFVEGKVLPAVEVLEQRAK</sequence>
<proteinExistence type="inferred from homology"/>
<evidence type="ECO:0000255" key="1">
    <source>
        <dbReference type="HAMAP-Rule" id="MF_00145"/>
    </source>
</evidence>
<dbReference type="EC" id="2.7.2.3" evidence="1"/>
<dbReference type="EMBL" id="CP000680">
    <property type="protein sequence ID" value="ABP83230.1"/>
    <property type="molecule type" value="Genomic_DNA"/>
</dbReference>
<dbReference type="SMR" id="A4XPG4"/>
<dbReference type="STRING" id="399739.Pmen_0460"/>
<dbReference type="KEGG" id="pmy:Pmen_0460"/>
<dbReference type="PATRIC" id="fig|399739.8.peg.466"/>
<dbReference type="eggNOG" id="COG0126">
    <property type="taxonomic scope" value="Bacteria"/>
</dbReference>
<dbReference type="HOGENOM" id="CLU_025427_0_2_6"/>
<dbReference type="OrthoDB" id="9808460at2"/>
<dbReference type="UniPathway" id="UPA00109">
    <property type="reaction ID" value="UER00185"/>
</dbReference>
<dbReference type="GO" id="GO:0005829">
    <property type="term" value="C:cytosol"/>
    <property type="evidence" value="ECO:0007669"/>
    <property type="project" value="TreeGrafter"/>
</dbReference>
<dbReference type="GO" id="GO:0043531">
    <property type="term" value="F:ADP binding"/>
    <property type="evidence" value="ECO:0007669"/>
    <property type="project" value="TreeGrafter"/>
</dbReference>
<dbReference type="GO" id="GO:0005524">
    <property type="term" value="F:ATP binding"/>
    <property type="evidence" value="ECO:0007669"/>
    <property type="project" value="UniProtKB-KW"/>
</dbReference>
<dbReference type="GO" id="GO:0004618">
    <property type="term" value="F:phosphoglycerate kinase activity"/>
    <property type="evidence" value="ECO:0007669"/>
    <property type="project" value="UniProtKB-UniRule"/>
</dbReference>
<dbReference type="GO" id="GO:0006094">
    <property type="term" value="P:gluconeogenesis"/>
    <property type="evidence" value="ECO:0007669"/>
    <property type="project" value="TreeGrafter"/>
</dbReference>
<dbReference type="GO" id="GO:0006096">
    <property type="term" value="P:glycolytic process"/>
    <property type="evidence" value="ECO:0007669"/>
    <property type="project" value="UniProtKB-UniRule"/>
</dbReference>
<dbReference type="FunFam" id="3.40.50.1260:FF:000001">
    <property type="entry name" value="Phosphoglycerate kinase"/>
    <property type="match status" value="1"/>
</dbReference>
<dbReference type="FunFam" id="3.40.50.1260:FF:000002">
    <property type="entry name" value="Phosphoglycerate kinase"/>
    <property type="match status" value="1"/>
</dbReference>
<dbReference type="Gene3D" id="3.40.50.1260">
    <property type="entry name" value="Phosphoglycerate kinase, N-terminal domain"/>
    <property type="match status" value="2"/>
</dbReference>
<dbReference type="HAMAP" id="MF_00145">
    <property type="entry name" value="Phosphoglyc_kinase"/>
    <property type="match status" value="1"/>
</dbReference>
<dbReference type="InterPro" id="IPR001576">
    <property type="entry name" value="Phosphoglycerate_kinase"/>
</dbReference>
<dbReference type="InterPro" id="IPR015911">
    <property type="entry name" value="Phosphoglycerate_kinase_CS"/>
</dbReference>
<dbReference type="InterPro" id="IPR015824">
    <property type="entry name" value="Phosphoglycerate_kinase_N"/>
</dbReference>
<dbReference type="InterPro" id="IPR036043">
    <property type="entry name" value="Phosphoglycerate_kinase_sf"/>
</dbReference>
<dbReference type="PANTHER" id="PTHR11406">
    <property type="entry name" value="PHOSPHOGLYCERATE KINASE"/>
    <property type="match status" value="1"/>
</dbReference>
<dbReference type="PANTHER" id="PTHR11406:SF23">
    <property type="entry name" value="PHOSPHOGLYCERATE KINASE 1, CHLOROPLASTIC-RELATED"/>
    <property type="match status" value="1"/>
</dbReference>
<dbReference type="Pfam" id="PF00162">
    <property type="entry name" value="PGK"/>
    <property type="match status" value="1"/>
</dbReference>
<dbReference type="PIRSF" id="PIRSF000724">
    <property type="entry name" value="Pgk"/>
    <property type="match status" value="1"/>
</dbReference>
<dbReference type="PRINTS" id="PR00477">
    <property type="entry name" value="PHGLYCKINASE"/>
</dbReference>
<dbReference type="SUPFAM" id="SSF53748">
    <property type="entry name" value="Phosphoglycerate kinase"/>
    <property type="match status" value="1"/>
</dbReference>
<dbReference type="PROSITE" id="PS00111">
    <property type="entry name" value="PGLYCERATE_KINASE"/>
    <property type="match status" value="1"/>
</dbReference>
<feature type="chain" id="PRO_1000058040" description="Phosphoglycerate kinase">
    <location>
        <begin position="1"/>
        <end position="386"/>
    </location>
</feature>
<feature type="binding site" evidence="1">
    <location>
        <begin position="21"/>
        <end position="23"/>
    </location>
    <ligand>
        <name>substrate</name>
    </ligand>
</feature>
<feature type="binding site" evidence="1">
    <location>
        <position position="36"/>
    </location>
    <ligand>
        <name>substrate</name>
    </ligand>
</feature>
<feature type="binding site" evidence="1">
    <location>
        <begin position="59"/>
        <end position="62"/>
    </location>
    <ligand>
        <name>substrate</name>
    </ligand>
</feature>
<feature type="binding site" evidence="1">
    <location>
        <position position="113"/>
    </location>
    <ligand>
        <name>substrate</name>
    </ligand>
</feature>
<feature type="binding site" evidence="1">
    <location>
        <position position="146"/>
    </location>
    <ligand>
        <name>substrate</name>
    </ligand>
</feature>
<feature type="binding site" evidence="1">
    <location>
        <position position="197"/>
    </location>
    <ligand>
        <name>ATP</name>
        <dbReference type="ChEBI" id="CHEBI:30616"/>
    </ligand>
</feature>
<feature type="binding site" evidence="1">
    <location>
        <position position="314"/>
    </location>
    <ligand>
        <name>ATP</name>
        <dbReference type="ChEBI" id="CHEBI:30616"/>
    </ligand>
</feature>
<feature type="binding site" evidence="1">
    <location>
        <begin position="340"/>
        <end position="343"/>
    </location>
    <ligand>
        <name>ATP</name>
        <dbReference type="ChEBI" id="CHEBI:30616"/>
    </ligand>
</feature>
<accession>A4XPG4</accession>